<gene>
    <name type="ORF">CG6179</name>
</gene>
<organism>
    <name type="scientific">Drosophila melanogaster</name>
    <name type="common">Fruit fly</name>
    <dbReference type="NCBI Taxonomy" id="7227"/>
    <lineage>
        <taxon>Eukaryota</taxon>
        <taxon>Metazoa</taxon>
        <taxon>Ecdysozoa</taxon>
        <taxon>Arthropoda</taxon>
        <taxon>Hexapoda</taxon>
        <taxon>Insecta</taxon>
        <taxon>Pterygota</taxon>
        <taxon>Neoptera</taxon>
        <taxon>Endopterygota</taxon>
        <taxon>Diptera</taxon>
        <taxon>Brachycera</taxon>
        <taxon>Muscomorpha</taxon>
        <taxon>Ephydroidea</taxon>
        <taxon>Drosophilidae</taxon>
        <taxon>Drosophila</taxon>
        <taxon>Sophophora</taxon>
    </lineage>
</organism>
<evidence type="ECO:0000250" key="1"/>
<evidence type="ECO:0000256" key="2">
    <source>
        <dbReference type="SAM" id="MobiDB-lite"/>
    </source>
</evidence>
<evidence type="ECO:0000305" key="3"/>
<sequence>MTRHARNCTAGAVYTYNEKKRDAAESGYGTNAQRLGKDSVKSFDCCSLTLQPCRRPVITKDGYLFDKEAILQYIVTKKNEYSRRLKEYERLRRAEEDKLSQEANSKQQARMERFVNAEKPAMTPAHSSAAASEKPSTSSAAAAASSESSSASSISNMTNGHEKKLPSFWLPSECPNAGLAKAQKPDATIYCPVSQKPLRVKDLIDVKFTLLKDGDTKRSLIAKEARYMCPITHDVLSNAVPCAVLRPTGDVVTMECVERLIRKDMIHPLTDRKLKEKDIIPLQRGGTGYATTNDHLQAKEKRPMLQA</sequence>
<reference key="1">
    <citation type="journal article" date="2000" name="Science">
        <title>The genome sequence of Drosophila melanogaster.</title>
        <authorList>
            <person name="Adams M.D."/>
            <person name="Celniker S.E."/>
            <person name="Holt R.A."/>
            <person name="Evans C.A."/>
            <person name="Gocayne J.D."/>
            <person name="Amanatides P.G."/>
            <person name="Scherer S.E."/>
            <person name="Li P.W."/>
            <person name="Hoskins R.A."/>
            <person name="Galle R.F."/>
            <person name="George R.A."/>
            <person name="Lewis S.E."/>
            <person name="Richards S."/>
            <person name="Ashburner M."/>
            <person name="Henderson S.N."/>
            <person name="Sutton G.G."/>
            <person name="Wortman J.R."/>
            <person name="Yandell M.D."/>
            <person name="Zhang Q."/>
            <person name="Chen L.X."/>
            <person name="Brandon R.C."/>
            <person name="Rogers Y.-H.C."/>
            <person name="Blazej R.G."/>
            <person name="Champe M."/>
            <person name="Pfeiffer B.D."/>
            <person name="Wan K.H."/>
            <person name="Doyle C."/>
            <person name="Baxter E.G."/>
            <person name="Helt G."/>
            <person name="Nelson C.R."/>
            <person name="Miklos G.L.G."/>
            <person name="Abril J.F."/>
            <person name="Agbayani A."/>
            <person name="An H.-J."/>
            <person name="Andrews-Pfannkoch C."/>
            <person name="Baldwin D."/>
            <person name="Ballew R.M."/>
            <person name="Basu A."/>
            <person name="Baxendale J."/>
            <person name="Bayraktaroglu L."/>
            <person name="Beasley E.M."/>
            <person name="Beeson K.Y."/>
            <person name="Benos P.V."/>
            <person name="Berman B.P."/>
            <person name="Bhandari D."/>
            <person name="Bolshakov S."/>
            <person name="Borkova D."/>
            <person name="Botchan M.R."/>
            <person name="Bouck J."/>
            <person name="Brokstein P."/>
            <person name="Brottier P."/>
            <person name="Burtis K.C."/>
            <person name="Busam D.A."/>
            <person name="Butler H."/>
            <person name="Cadieu E."/>
            <person name="Center A."/>
            <person name="Chandra I."/>
            <person name="Cherry J.M."/>
            <person name="Cawley S."/>
            <person name="Dahlke C."/>
            <person name="Davenport L.B."/>
            <person name="Davies P."/>
            <person name="de Pablos B."/>
            <person name="Delcher A."/>
            <person name="Deng Z."/>
            <person name="Mays A.D."/>
            <person name="Dew I."/>
            <person name="Dietz S.M."/>
            <person name="Dodson K."/>
            <person name="Doup L.E."/>
            <person name="Downes M."/>
            <person name="Dugan-Rocha S."/>
            <person name="Dunkov B.C."/>
            <person name="Dunn P."/>
            <person name="Durbin K.J."/>
            <person name="Evangelista C.C."/>
            <person name="Ferraz C."/>
            <person name="Ferriera S."/>
            <person name="Fleischmann W."/>
            <person name="Fosler C."/>
            <person name="Gabrielian A.E."/>
            <person name="Garg N.S."/>
            <person name="Gelbart W.M."/>
            <person name="Glasser K."/>
            <person name="Glodek A."/>
            <person name="Gong F."/>
            <person name="Gorrell J.H."/>
            <person name="Gu Z."/>
            <person name="Guan P."/>
            <person name="Harris M."/>
            <person name="Harris N.L."/>
            <person name="Harvey D.A."/>
            <person name="Heiman T.J."/>
            <person name="Hernandez J.R."/>
            <person name="Houck J."/>
            <person name="Hostin D."/>
            <person name="Houston K.A."/>
            <person name="Howland T.J."/>
            <person name="Wei M.-H."/>
            <person name="Ibegwam C."/>
            <person name="Jalali M."/>
            <person name="Kalush F."/>
            <person name="Karpen G.H."/>
            <person name="Ke Z."/>
            <person name="Kennison J.A."/>
            <person name="Ketchum K.A."/>
            <person name="Kimmel B.E."/>
            <person name="Kodira C.D."/>
            <person name="Kraft C.L."/>
            <person name="Kravitz S."/>
            <person name="Kulp D."/>
            <person name="Lai Z."/>
            <person name="Lasko P."/>
            <person name="Lei Y."/>
            <person name="Levitsky A.A."/>
            <person name="Li J.H."/>
            <person name="Li Z."/>
            <person name="Liang Y."/>
            <person name="Lin X."/>
            <person name="Liu X."/>
            <person name="Mattei B."/>
            <person name="McIntosh T.C."/>
            <person name="McLeod M.P."/>
            <person name="McPherson D."/>
            <person name="Merkulov G."/>
            <person name="Milshina N.V."/>
            <person name="Mobarry C."/>
            <person name="Morris J."/>
            <person name="Moshrefi A."/>
            <person name="Mount S.M."/>
            <person name="Moy M."/>
            <person name="Murphy B."/>
            <person name="Murphy L."/>
            <person name="Muzny D.M."/>
            <person name="Nelson D.L."/>
            <person name="Nelson D.R."/>
            <person name="Nelson K.A."/>
            <person name="Nixon K."/>
            <person name="Nusskern D.R."/>
            <person name="Pacleb J.M."/>
            <person name="Palazzolo M."/>
            <person name="Pittman G.S."/>
            <person name="Pan S."/>
            <person name="Pollard J."/>
            <person name="Puri V."/>
            <person name="Reese M.G."/>
            <person name="Reinert K."/>
            <person name="Remington K."/>
            <person name="Saunders R.D.C."/>
            <person name="Scheeler F."/>
            <person name="Shen H."/>
            <person name="Shue B.C."/>
            <person name="Siden-Kiamos I."/>
            <person name="Simpson M."/>
            <person name="Skupski M.P."/>
            <person name="Smith T.J."/>
            <person name="Spier E."/>
            <person name="Spradling A.C."/>
            <person name="Stapleton M."/>
            <person name="Strong R."/>
            <person name="Sun E."/>
            <person name="Svirskas R."/>
            <person name="Tector C."/>
            <person name="Turner R."/>
            <person name="Venter E."/>
            <person name="Wang A.H."/>
            <person name="Wang X."/>
            <person name="Wang Z.-Y."/>
            <person name="Wassarman D.A."/>
            <person name="Weinstock G.M."/>
            <person name="Weissenbach J."/>
            <person name="Williams S.M."/>
            <person name="Woodage T."/>
            <person name="Worley K.C."/>
            <person name="Wu D."/>
            <person name="Yang S."/>
            <person name="Yao Q.A."/>
            <person name="Ye J."/>
            <person name="Yeh R.-F."/>
            <person name="Zaveri J.S."/>
            <person name="Zhan M."/>
            <person name="Zhang G."/>
            <person name="Zhao Q."/>
            <person name="Zheng L."/>
            <person name="Zheng X.H."/>
            <person name="Zhong F.N."/>
            <person name="Zhong W."/>
            <person name="Zhou X."/>
            <person name="Zhu S.C."/>
            <person name="Zhu X."/>
            <person name="Smith H.O."/>
            <person name="Gibbs R.A."/>
            <person name="Myers E.W."/>
            <person name="Rubin G.M."/>
            <person name="Venter J.C."/>
        </authorList>
    </citation>
    <scope>NUCLEOTIDE SEQUENCE [LARGE SCALE GENOMIC DNA]</scope>
    <source>
        <strain>Berkeley</strain>
    </source>
</reference>
<reference key="2">
    <citation type="journal article" date="2002" name="Genome Biol.">
        <title>Annotation of the Drosophila melanogaster euchromatic genome: a systematic review.</title>
        <authorList>
            <person name="Misra S."/>
            <person name="Crosby M.A."/>
            <person name="Mungall C.J."/>
            <person name="Matthews B.B."/>
            <person name="Campbell K.S."/>
            <person name="Hradecky P."/>
            <person name="Huang Y."/>
            <person name="Kaminker J.S."/>
            <person name="Millburn G.H."/>
            <person name="Prochnik S.E."/>
            <person name="Smith C.D."/>
            <person name="Tupy J.L."/>
            <person name="Whitfield E.J."/>
            <person name="Bayraktaroglu L."/>
            <person name="Berman B.P."/>
            <person name="Bettencourt B.R."/>
            <person name="Celniker S.E."/>
            <person name="de Grey A.D.N.J."/>
            <person name="Drysdale R.A."/>
            <person name="Harris N.L."/>
            <person name="Richter J."/>
            <person name="Russo S."/>
            <person name="Schroeder A.J."/>
            <person name="Shu S.Q."/>
            <person name="Stapleton M."/>
            <person name="Yamada C."/>
            <person name="Ashburner M."/>
            <person name="Gelbart W.M."/>
            <person name="Rubin G.M."/>
            <person name="Lewis S.E."/>
        </authorList>
    </citation>
    <scope>GENOME REANNOTATION</scope>
    <source>
        <strain>Berkeley</strain>
    </source>
</reference>
<dbReference type="EMBL" id="AE014298">
    <property type="protein sequence ID" value="AAF48829.1"/>
    <property type="molecule type" value="Genomic_DNA"/>
</dbReference>
<dbReference type="RefSeq" id="NP_573288.1">
    <property type="nucleotide sequence ID" value="NM_133060.3"/>
</dbReference>
<dbReference type="SMR" id="Q9VWV8"/>
<dbReference type="BioGRID" id="59136">
    <property type="interactions" value="1"/>
</dbReference>
<dbReference type="FunCoup" id="Q9VWV8">
    <property type="interactions" value="1750"/>
</dbReference>
<dbReference type="STRING" id="7227.FBpp0074330"/>
<dbReference type="PaxDb" id="7227-FBpp0074330"/>
<dbReference type="DNASU" id="32819"/>
<dbReference type="EnsemblMetazoa" id="FBtr0074558">
    <property type="protein sequence ID" value="FBpp0074330"/>
    <property type="gene ID" value="FBgn0030915"/>
</dbReference>
<dbReference type="GeneID" id="32819"/>
<dbReference type="KEGG" id="dme:Dmel_CG6179"/>
<dbReference type="UCSC" id="CG6179-RA">
    <property type="organism name" value="d. melanogaster"/>
</dbReference>
<dbReference type="AGR" id="FB:FBgn0030915"/>
<dbReference type="FlyBase" id="FBgn0030915">
    <property type="gene designation" value="CG6179"/>
</dbReference>
<dbReference type="VEuPathDB" id="VectorBase:FBgn0030915"/>
<dbReference type="eggNOG" id="KOG3039">
    <property type="taxonomic scope" value="Eukaryota"/>
</dbReference>
<dbReference type="GeneTree" id="ENSGT00390000015505"/>
<dbReference type="HOGENOM" id="CLU_053742_0_0_1"/>
<dbReference type="InParanoid" id="Q9VWV8"/>
<dbReference type="OMA" id="PCVTKFM"/>
<dbReference type="OrthoDB" id="116827at2759"/>
<dbReference type="PhylomeDB" id="Q9VWV8"/>
<dbReference type="Reactome" id="R-DME-203754">
    <property type="pathway name" value="NOSIP mediated eNOS trafficking"/>
</dbReference>
<dbReference type="BioGRID-ORCS" id="32819">
    <property type="hits" value="0 hits in 1 CRISPR screen"/>
</dbReference>
<dbReference type="GenomeRNAi" id="32819"/>
<dbReference type="PRO" id="PR:Q9VWV8"/>
<dbReference type="Proteomes" id="UP000000803">
    <property type="component" value="Chromosome X"/>
</dbReference>
<dbReference type="Bgee" id="FBgn0030915">
    <property type="expression patterns" value="Expressed in cleaving embryo and 64 other cell types or tissues"/>
</dbReference>
<dbReference type="ExpressionAtlas" id="Q9VWV8">
    <property type="expression patterns" value="baseline and differential"/>
</dbReference>
<dbReference type="GO" id="GO:0071013">
    <property type="term" value="C:catalytic step 2 spliceosome"/>
    <property type="evidence" value="ECO:0007005"/>
    <property type="project" value="FlyBase"/>
</dbReference>
<dbReference type="GO" id="GO:0005737">
    <property type="term" value="C:cytoplasm"/>
    <property type="evidence" value="ECO:0000250"/>
    <property type="project" value="UniProtKB"/>
</dbReference>
<dbReference type="GO" id="GO:0005634">
    <property type="term" value="C:nucleus"/>
    <property type="evidence" value="ECO:0000250"/>
    <property type="project" value="UniProtKB"/>
</dbReference>
<dbReference type="GO" id="GO:0003723">
    <property type="term" value="F:RNA binding"/>
    <property type="evidence" value="ECO:0000250"/>
    <property type="project" value="FlyBase"/>
</dbReference>
<dbReference type="GO" id="GO:0061630">
    <property type="term" value="F:ubiquitin protein ligase activity"/>
    <property type="evidence" value="ECO:0007669"/>
    <property type="project" value="InterPro"/>
</dbReference>
<dbReference type="GO" id="GO:0000398">
    <property type="term" value="P:mRNA splicing, via spliceosome"/>
    <property type="evidence" value="ECO:0000305"/>
    <property type="project" value="FlyBase"/>
</dbReference>
<dbReference type="GO" id="GO:0043086">
    <property type="term" value="P:negative regulation of catalytic activity"/>
    <property type="evidence" value="ECO:0000250"/>
    <property type="project" value="UniProtKB"/>
</dbReference>
<dbReference type="GO" id="GO:0051001">
    <property type="term" value="P:negative regulation of nitric-oxide synthase activity"/>
    <property type="evidence" value="ECO:0000250"/>
    <property type="project" value="UniProtKB"/>
</dbReference>
<dbReference type="CDD" id="cd16661">
    <property type="entry name" value="RING-Ubox1_NOSIP"/>
    <property type="match status" value="1"/>
</dbReference>
<dbReference type="CDD" id="cd16662">
    <property type="entry name" value="RING-Ubox2_NOSIP"/>
    <property type="match status" value="1"/>
</dbReference>
<dbReference type="FunFam" id="3.30.40.10:FF:000240">
    <property type="entry name" value="Nitric oxide synthase-interacting protein"/>
    <property type="match status" value="1"/>
</dbReference>
<dbReference type="FunFam" id="3.30.40.10:FF:000251">
    <property type="entry name" value="Nitric oxide synthase-interacting protein"/>
    <property type="match status" value="1"/>
</dbReference>
<dbReference type="Gene3D" id="3.30.40.10">
    <property type="entry name" value="Zinc/RING finger domain, C3HC4 (zinc finger)"/>
    <property type="match status" value="2"/>
</dbReference>
<dbReference type="InterPro" id="IPR016818">
    <property type="entry name" value="NOSIP"/>
</dbReference>
<dbReference type="InterPro" id="IPR031790">
    <property type="entry name" value="Znf-NOSIP"/>
</dbReference>
<dbReference type="InterPro" id="IPR013083">
    <property type="entry name" value="Znf_RING/FYVE/PHD"/>
</dbReference>
<dbReference type="PANTHER" id="PTHR13063">
    <property type="entry name" value="ENOS INTERACTING PROTEIN"/>
    <property type="match status" value="1"/>
</dbReference>
<dbReference type="PANTHER" id="PTHR13063:SF10">
    <property type="entry name" value="NITRIC OXIDE SYNTHASE-INTERACTING PROTEIN"/>
    <property type="match status" value="1"/>
</dbReference>
<dbReference type="Pfam" id="PF15906">
    <property type="entry name" value="zf-NOSIP"/>
    <property type="match status" value="1"/>
</dbReference>
<dbReference type="PIRSF" id="PIRSF023577">
    <property type="entry name" value="ENOS_interacting"/>
    <property type="match status" value="1"/>
</dbReference>
<dbReference type="SUPFAM" id="SSF57850">
    <property type="entry name" value="RING/U-box"/>
    <property type="match status" value="2"/>
</dbReference>
<feature type="chain" id="PRO_0000280592" description="Nitric oxide synthase-interacting protein homolog">
    <location>
        <begin position="1"/>
        <end position="307"/>
    </location>
</feature>
<feature type="region of interest" description="Disordered" evidence="2">
    <location>
        <begin position="120"/>
        <end position="159"/>
    </location>
</feature>
<feature type="compositionally biased region" description="Low complexity" evidence="2">
    <location>
        <begin position="127"/>
        <end position="155"/>
    </location>
</feature>
<name>NOSIP_DROME</name>
<accession>Q9VWV8</accession>
<proteinExistence type="inferred from homology"/>
<protein>
    <recommendedName>
        <fullName>Nitric oxide synthase-interacting protein homolog</fullName>
    </recommendedName>
</protein>
<comment type="function">
    <text evidence="1">Negatively regulates nitric oxide production by inducing nitric oxide synthase translocation to actin cytoskeleton and inhibiting its enzymatic activity.</text>
</comment>
<comment type="subcellular location">
    <subcellularLocation>
        <location evidence="1">Cytoplasm</location>
    </subcellularLocation>
    <subcellularLocation>
        <location evidence="1">Nucleus</location>
    </subcellularLocation>
</comment>
<comment type="similarity">
    <text evidence="3">Belongs to the NOSIP family.</text>
</comment>
<keyword id="KW-0963">Cytoplasm</keyword>
<keyword id="KW-0539">Nucleus</keyword>
<keyword id="KW-1185">Reference proteome</keyword>